<name>PRP5_ASPNC</name>
<accession>A2QQA8</accession>
<reference key="1">
    <citation type="journal article" date="2007" name="Nat. Biotechnol.">
        <title>Genome sequencing and analysis of the versatile cell factory Aspergillus niger CBS 513.88.</title>
        <authorList>
            <person name="Pel H.J."/>
            <person name="de Winde J.H."/>
            <person name="Archer D.B."/>
            <person name="Dyer P.S."/>
            <person name="Hofmann G."/>
            <person name="Schaap P.J."/>
            <person name="Turner G."/>
            <person name="de Vries R.P."/>
            <person name="Albang R."/>
            <person name="Albermann K."/>
            <person name="Andersen M.R."/>
            <person name="Bendtsen J.D."/>
            <person name="Benen J.A.E."/>
            <person name="van den Berg M."/>
            <person name="Breestraat S."/>
            <person name="Caddick M.X."/>
            <person name="Contreras R."/>
            <person name="Cornell M."/>
            <person name="Coutinho P.M."/>
            <person name="Danchin E.G.J."/>
            <person name="Debets A.J.M."/>
            <person name="Dekker P."/>
            <person name="van Dijck P.W.M."/>
            <person name="van Dijk A."/>
            <person name="Dijkhuizen L."/>
            <person name="Driessen A.J.M."/>
            <person name="d'Enfert C."/>
            <person name="Geysens S."/>
            <person name="Goosen C."/>
            <person name="Groot G.S.P."/>
            <person name="de Groot P.W.J."/>
            <person name="Guillemette T."/>
            <person name="Henrissat B."/>
            <person name="Herweijer M."/>
            <person name="van den Hombergh J.P.T.W."/>
            <person name="van den Hondel C.A.M.J.J."/>
            <person name="van der Heijden R.T.J.M."/>
            <person name="van der Kaaij R.M."/>
            <person name="Klis F.M."/>
            <person name="Kools H.J."/>
            <person name="Kubicek C.P."/>
            <person name="van Kuyk P.A."/>
            <person name="Lauber J."/>
            <person name="Lu X."/>
            <person name="van der Maarel M.J.E.C."/>
            <person name="Meulenberg R."/>
            <person name="Menke H."/>
            <person name="Mortimer M.A."/>
            <person name="Nielsen J."/>
            <person name="Oliver S.G."/>
            <person name="Olsthoorn M."/>
            <person name="Pal K."/>
            <person name="van Peij N.N.M.E."/>
            <person name="Ram A.F.J."/>
            <person name="Rinas U."/>
            <person name="Roubos J.A."/>
            <person name="Sagt C.M.J."/>
            <person name="Schmoll M."/>
            <person name="Sun J."/>
            <person name="Ussery D."/>
            <person name="Varga J."/>
            <person name="Vervecken W."/>
            <person name="van de Vondervoort P.J.J."/>
            <person name="Wedler H."/>
            <person name="Woesten H.A.B."/>
            <person name="Zeng A.-P."/>
            <person name="van Ooyen A.J.J."/>
            <person name="Visser J."/>
            <person name="Stam H."/>
        </authorList>
    </citation>
    <scope>NUCLEOTIDE SEQUENCE [LARGE SCALE GENOMIC DNA]</scope>
    <source>
        <strain>ATCC MYA-4892 / CBS 513.88 / FGSC A1513</strain>
    </source>
</reference>
<protein>
    <recommendedName>
        <fullName>Pre-mRNA-processing ATP-dependent RNA helicase prp5</fullName>
        <ecNumber>3.6.4.13</ecNumber>
    </recommendedName>
</protein>
<evidence type="ECO:0000250" key="1"/>
<evidence type="ECO:0000255" key="2">
    <source>
        <dbReference type="PROSITE-ProRule" id="PRU00541"/>
    </source>
</evidence>
<evidence type="ECO:0000255" key="3">
    <source>
        <dbReference type="PROSITE-ProRule" id="PRU00542"/>
    </source>
</evidence>
<evidence type="ECO:0000256" key="4">
    <source>
        <dbReference type="SAM" id="MobiDB-lite"/>
    </source>
</evidence>
<evidence type="ECO:0000305" key="5"/>
<sequence length="1180" mass="130133">MARHGDTRSPSPVGSTYSSSRRNRRDDDRYERSRRDDGRSYRRSRSPERRYRERERDRDRDAFRRRDRSLDRRDEDSYRPGRRERSRDRRRSRERDDYRRRSRDRDYRSRREDSRDRARRRTDDSADLKYKSRRDDSRDRAKDAPRSRETSKPSTPAATAAPTEDEKRAERLAKLEAWKQKQAAEKERKQREAAAAGGARSILEEIDRKSGLSPAVSSPQSPATPGVDATPGTYTGKFDPKAIAKSASSTPAPPAVLGNDVAVPPSVKPVTTIPSQVKPKSTTSASATLKAKGNVGGFGLGTKQAADTEKSTATKTLGFGEEESTRRKLERLPTPPLEDAKDVNGTADGAADEDEDDVDMQDGGTEEEAAAAARAAAERREERLQSEAIKAQSNGAESNDTVMGDAPSQEAADNMEVDAQEEEEIDPLDAFMSELAESAPPKKKVGAKFSRTKEQQPEALFGDEHDIDMTAVGDGDADDFLAIANKAKKKKDIPAVDHKKVEYETFRKKFYTEPSDLAQMSDEEAASLRLELDGIKVRGVDVPKPVQKWSQCGLGVQTLDVIDKLGYEKTTSIQAQAIPAIMSGRDVIGVAKTGSGKTIAFLIPMFRHIKDQRPLDNMEGPVGLIMTPTRELATQIHKDCKPFLKALNLRAVCAYGGAPIKDQIADLKRGAEIIVCTPGRMIDLLAANAGRVTNLRRVTYVVLDEADRMFDMGFEPQVMKIMANIRPDRQTVLFSATFPRNMEALARKTLTKPIEIVVGGKSVVAPEITQIVEVRNDDQKFVRLLELLGNLYSSDENEDARALIFVDRQEAADALLRELMRKGYPCMSIHGGKDQIDRDSTIEDFKAGIFPVLIATSVAARGLDVKQLKLVVNYDAPNHLEDYVHRAGRTGRAGNTGTAVTFLTEDQERYSVDIAKALKQSGQKVPEPVQKLVDAFLEKVKAGKEKASASGFGGKGLERLDQERDAARMRERRTYKTGEEGEDEEEKEEKNEQAEERFNKAISSVQSTAAPSLPGVPKGIDLDGKITVHKTEKDPNSTSKNPLDKVGSAVADIHARLSRAGVMRSGVPIDNRGPDAGAFHATLEINDFPQKARWAVTNRTNVAKILEATGTSITTKGSFYPTGKVPGPGENPKLYILVEGETELAVTNAMRELMRLLKEGTIAAADSDARAPVGGRYNVV</sequence>
<keyword id="KW-0067">ATP-binding</keyword>
<keyword id="KW-0347">Helicase</keyword>
<keyword id="KW-0378">Hydrolase</keyword>
<keyword id="KW-0507">mRNA processing</keyword>
<keyword id="KW-0508">mRNA splicing</keyword>
<keyword id="KW-0547">Nucleotide-binding</keyword>
<keyword id="KW-0539">Nucleus</keyword>
<keyword id="KW-1185">Reference proteome</keyword>
<proteinExistence type="inferred from homology"/>
<comment type="function">
    <text evidence="1">ATP-dependent RNA helicase involved spliceosome assembly and in nuclear splicing. Catalyzes an ATP-dependent conformational change of U2 snRNP. Bridges U1 and U2 snRNPs and enables stable U2 snRNP association with intron RNA (By similarity).</text>
</comment>
<comment type="catalytic activity">
    <reaction>
        <text>ATP + H2O = ADP + phosphate + H(+)</text>
        <dbReference type="Rhea" id="RHEA:13065"/>
        <dbReference type="ChEBI" id="CHEBI:15377"/>
        <dbReference type="ChEBI" id="CHEBI:15378"/>
        <dbReference type="ChEBI" id="CHEBI:30616"/>
        <dbReference type="ChEBI" id="CHEBI:43474"/>
        <dbReference type="ChEBI" id="CHEBI:456216"/>
        <dbReference type="EC" id="3.6.4.13"/>
    </reaction>
</comment>
<comment type="subcellular location">
    <subcellularLocation>
        <location evidence="1">Nucleus</location>
    </subcellularLocation>
</comment>
<comment type="domain">
    <text>The Q motif is unique to and characteristic of the DEAD box family of RNA helicases and controls ATP binding and hydrolysis.</text>
</comment>
<comment type="similarity">
    <text evidence="5">Belongs to the DEAD box helicase family. DDX46/PRP5 subfamily.</text>
</comment>
<comment type="sequence caution" evidence="5">
    <conflict type="erroneous gene model prediction">
        <sequence resource="EMBL-CDS" id="CAK39865"/>
    </conflict>
</comment>
<gene>
    <name type="primary">prp5</name>
    <name type="ORF">An08g01850</name>
</gene>
<feature type="chain" id="PRO_0000282691" description="Pre-mRNA-processing ATP-dependent RNA helicase prp5">
    <location>
        <begin position="1"/>
        <end position="1180"/>
    </location>
</feature>
<feature type="domain" description="Helicase ATP-binding" evidence="2">
    <location>
        <begin position="578"/>
        <end position="756"/>
    </location>
</feature>
<feature type="domain" description="Helicase C-terminal" evidence="3">
    <location>
        <begin position="783"/>
        <end position="933"/>
    </location>
</feature>
<feature type="region of interest" description="Disordered" evidence="4">
    <location>
        <begin position="1"/>
        <end position="421"/>
    </location>
</feature>
<feature type="region of interest" description="Disordered" evidence="4">
    <location>
        <begin position="947"/>
        <end position="996"/>
    </location>
</feature>
<feature type="short sequence motif" description="Q motif">
    <location>
        <begin position="547"/>
        <end position="575"/>
    </location>
</feature>
<feature type="short sequence motif" description="DEAD box">
    <location>
        <begin position="704"/>
        <end position="707"/>
    </location>
</feature>
<feature type="compositionally biased region" description="Low complexity" evidence="4">
    <location>
        <begin position="8"/>
        <end position="20"/>
    </location>
</feature>
<feature type="compositionally biased region" description="Basic and acidic residues" evidence="4">
    <location>
        <begin position="24"/>
        <end position="151"/>
    </location>
</feature>
<feature type="compositionally biased region" description="Low complexity" evidence="4">
    <location>
        <begin position="152"/>
        <end position="162"/>
    </location>
</feature>
<feature type="compositionally biased region" description="Basic and acidic residues" evidence="4">
    <location>
        <begin position="164"/>
        <end position="192"/>
    </location>
</feature>
<feature type="compositionally biased region" description="Low complexity" evidence="4">
    <location>
        <begin position="241"/>
        <end position="250"/>
    </location>
</feature>
<feature type="compositionally biased region" description="Polar residues" evidence="4">
    <location>
        <begin position="272"/>
        <end position="287"/>
    </location>
</feature>
<feature type="compositionally biased region" description="Acidic residues" evidence="4">
    <location>
        <begin position="350"/>
        <end position="369"/>
    </location>
</feature>
<feature type="compositionally biased region" description="Basic and acidic residues" evidence="4">
    <location>
        <begin position="376"/>
        <end position="385"/>
    </location>
</feature>
<feature type="compositionally biased region" description="Polar residues" evidence="4">
    <location>
        <begin position="391"/>
        <end position="401"/>
    </location>
</feature>
<feature type="compositionally biased region" description="Basic and acidic residues" evidence="4">
    <location>
        <begin position="956"/>
        <end position="979"/>
    </location>
</feature>
<feature type="binding site" evidence="2">
    <location>
        <begin position="591"/>
        <end position="598"/>
    </location>
    <ligand>
        <name>ATP</name>
        <dbReference type="ChEBI" id="CHEBI:30616"/>
    </ligand>
</feature>
<organism>
    <name type="scientific">Aspergillus niger (strain ATCC MYA-4892 / CBS 513.88 / FGSC A1513)</name>
    <dbReference type="NCBI Taxonomy" id="425011"/>
    <lineage>
        <taxon>Eukaryota</taxon>
        <taxon>Fungi</taxon>
        <taxon>Dikarya</taxon>
        <taxon>Ascomycota</taxon>
        <taxon>Pezizomycotina</taxon>
        <taxon>Eurotiomycetes</taxon>
        <taxon>Eurotiomycetidae</taxon>
        <taxon>Eurotiales</taxon>
        <taxon>Aspergillaceae</taxon>
        <taxon>Aspergillus</taxon>
        <taxon>Aspergillus subgen. Circumdati</taxon>
    </lineage>
</organism>
<dbReference type="EC" id="3.6.4.13"/>
<dbReference type="EMBL" id="AM270161">
    <property type="protein sequence ID" value="CAK39865.1"/>
    <property type="status" value="ALT_SEQ"/>
    <property type="molecule type" value="Genomic_DNA"/>
</dbReference>
<dbReference type="RefSeq" id="XP_001392304.2">
    <property type="nucleotide sequence ID" value="XM_001392267.2"/>
</dbReference>
<dbReference type="SMR" id="A2QQA8"/>
<dbReference type="EnsemblFungi" id="CAK39865">
    <property type="protein sequence ID" value="CAK39865"/>
    <property type="gene ID" value="An08g01850"/>
</dbReference>
<dbReference type="VEuPathDB" id="FungiDB:An08g01850"/>
<dbReference type="OrthoDB" id="119665at5052"/>
<dbReference type="Proteomes" id="UP000006706">
    <property type="component" value="Chromosome 8R"/>
</dbReference>
<dbReference type="GO" id="GO:0005634">
    <property type="term" value="C:nucleus"/>
    <property type="evidence" value="ECO:0007669"/>
    <property type="project" value="UniProtKB-SubCell"/>
</dbReference>
<dbReference type="GO" id="GO:0005524">
    <property type="term" value="F:ATP binding"/>
    <property type="evidence" value="ECO:0007669"/>
    <property type="project" value="UniProtKB-KW"/>
</dbReference>
<dbReference type="GO" id="GO:0016887">
    <property type="term" value="F:ATP hydrolysis activity"/>
    <property type="evidence" value="ECO:0007669"/>
    <property type="project" value="RHEA"/>
</dbReference>
<dbReference type="GO" id="GO:0003676">
    <property type="term" value="F:nucleic acid binding"/>
    <property type="evidence" value="ECO:0007669"/>
    <property type="project" value="InterPro"/>
</dbReference>
<dbReference type="GO" id="GO:0003724">
    <property type="term" value="F:RNA helicase activity"/>
    <property type="evidence" value="ECO:0007669"/>
    <property type="project" value="UniProtKB-EC"/>
</dbReference>
<dbReference type="GO" id="GO:0006397">
    <property type="term" value="P:mRNA processing"/>
    <property type="evidence" value="ECO:0007669"/>
    <property type="project" value="UniProtKB-KW"/>
</dbReference>
<dbReference type="GO" id="GO:0008380">
    <property type="term" value="P:RNA splicing"/>
    <property type="evidence" value="ECO:0007669"/>
    <property type="project" value="UniProtKB-KW"/>
</dbReference>
<dbReference type="CDD" id="cd17953">
    <property type="entry name" value="DEADc_DDX46"/>
    <property type="match status" value="1"/>
</dbReference>
<dbReference type="CDD" id="cd18787">
    <property type="entry name" value="SF2_C_DEAD"/>
    <property type="match status" value="1"/>
</dbReference>
<dbReference type="FunFam" id="3.40.50.300:FF:000079">
    <property type="entry name" value="probable ATP-dependent RNA helicase DDX17"/>
    <property type="match status" value="1"/>
</dbReference>
<dbReference type="Gene3D" id="3.40.50.300">
    <property type="entry name" value="P-loop containing nucleotide triphosphate hydrolases"/>
    <property type="match status" value="2"/>
</dbReference>
<dbReference type="InterPro" id="IPR011545">
    <property type="entry name" value="DEAD/DEAH_box_helicase_dom"/>
</dbReference>
<dbReference type="InterPro" id="IPR014001">
    <property type="entry name" value="Helicase_ATP-bd"/>
</dbReference>
<dbReference type="InterPro" id="IPR001650">
    <property type="entry name" value="Helicase_C-like"/>
</dbReference>
<dbReference type="InterPro" id="IPR027417">
    <property type="entry name" value="P-loop_NTPase"/>
</dbReference>
<dbReference type="InterPro" id="IPR056149">
    <property type="entry name" value="PRP5/DDX46/KHDC4_KH"/>
</dbReference>
<dbReference type="InterPro" id="IPR000629">
    <property type="entry name" value="RNA-helicase_DEAD-box_CS"/>
</dbReference>
<dbReference type="InterPro" id="IPR014014">
    <property type="entry name" value="RNA_helicase_DEAD_Q_motif"/>
</dbReference>
<dbReference type="PANTHER" id="PTHR47958">
    <property type="entry name" value="ATP-DEPENDENT RNA HELICASE DBP3"/>
    <property type="match status" value="1"/>
</dbReference>
<dbReference type="Pfam" id="PF00270">
    <property type="entry name" value="DEAD"/>
    <property type="match status" value="1"/>
</dbReference>
<dbReference type="Pfam" id="PF00271">
    <property type="entry name" value="Helicase_C"/>
    <property type="match status" value="1"/>
</dbReference>
<dbReference type="Pfam" id="PF23469">
    <property type="entry name" value="KH_12"/>
    <property type="match status" value="1"/>
</dbReference>
<dbReference type="SMART" id="SM00487">
    <property type="entry name" value="DEXDc"/>
    <property type="match status" value="1"/>
</dbReference>
<dbReference type="SMART" id="SM00490">
    <property type="entry name" value="HELICc"/>
    <property type="match status" value="1"/>
</dbReference>
<dbReference type="SUPFAM" id="SSF52540">
    <property type="entry name" value="P-loop containing nucleoside triphosphate hydrolases"/>
    <property type="match status" value="1"/>
</dbReference>
<dbReference type="PROSITE" id="PS00039">
    <property type="entry name" value="DEAD_ATP_HELICASE"/>
    <property type="match status" value="1"/>
</dbReference>
<dbReference type="PROSITE" id="PS51192">
    <property type="entry name" value="HELICASE_ATP_BIND_1"/>
    <property type="match status" value="1"/>
</dbReference>
<dbReference type="PROSITE" id="PS51194">
    <property type="entry name" value="HELICASE_CTER"/>
    <property type="match status" value="1"/>
</dbReference>
<dbReference type="PROSITE" id="PS51195">
    <property type="entry name" value="Q_MOTIF"/>
    <property type="match status" value="1"/>
</dbReference>